<sequence>MIPGEYHVASEPIDYNGGYEAISLEVKNVGDRAAQVGSHYHFYEANEAGLQFDREKARGKRLDIPAGTAIRFEPGETKTVQLIDFGGKRRIFGFNNKVNGFLD</sequence>
<protein>
    <recommendedName>
        <fullName evidence="1">Urease subunit beta</fullName>
        <ecNumber evidence="1">3.5.1.5</ecNumber>
    </recommendedName>
    <alternativeName>
        <fullName evidence="1">Urea amidohydrolase subunit beta</fullName>
    </alternativeName>
</protein>
<organism>
    <name type="scientific">Streptococcus thermophilus (strain ATCC BAA-250 / LMG 18311)</name>
    <dbReference type="NCBI Taxonomy" id="264199"/>
    <lineage>
        <taxon>Bacteria</taxon>
        <taxon>Bacillati</taxon>
        <taxon>Bacillota</taxon>
        <taxon>Bacilli</taxon>
        <taxon>Lactobacillales</taxon>
        <taxon>Streptococcaceae</taxon>
        <taxon>Streptococcus</taxon>
    </lineage>
</organism>
<gene>
    <name evidence="1" type="primary">ureB</name>
    <name type="ordered locus">stu0282</name>
</gene>
<feature type="chain" id="PRO_0000234275" description="Urease subunit beta">
    <location>
        <begin position="1"/>
        <end position="103"/>
    </location>
</feature>
<keyword id="KW-0963">Cytoplasm</keyword>
<keyword id="KW-0378">Hydrolase</keyword>
<keyword id="KW-1185">Reference proteome</keyword>
<reference key="1">
    <citation type="journal article" date="2004" name="Nat. Biotechnol.">
        <title>Complete sequence and comparative genome analysis of the dairy bacterium Streptococcus thermophilus.</title>
        <authorList>
            <person name="Bolotin A."/>
            <person name="Quinquis B."/>
            <person name="Renault P."/>
            <person name="Sorokin A."/>
            <person name="Ehrlich S.D."/>
            <person name="Kulakauskas S."/>
            <person name="Lapidus A."/>
            <person name="Goltsman E."/>
            <person name="Mazur M."/>
            <person name="Pusch G.D."/>
            <person name="Fonstein M."/>
            <person name="Overbeek R."/>
            <person name="Kyprides N."/>
            <person name="Purnelle B."/>
            <person name="Prozzi D."/>
            <person name="Ngui K."/>
            <person name="Masuy D."/>
            <person name="Hancy F."/>
            <person name="Burteau S."/>
            <person name="Boutry M."/>
            <person name="Delcour J."/>
            <person name="Goffeau A."/>
            <person name="Hols P."/>
        </authorList>
    </citation>
    <scope>NUCLEOTIDE SEQUENCE [LARGE SCALE GENOMIC DNA]</scope>
    <source>
        <strain>ATCC BAA-250 / LMG 18311</strain>
    </source>
</reference>
<comment type="catalytic activity">
    <reaction evidence="1">
        <text>urea + 2 H2O + H(+) = hydrogencarbonate + 2 NH4(+)</text>
        <dbReference type="Rhea" id="RHEA:20557"/>
        <dbReference type="ChEBI" id="CHEBI:15377"/>
        <dbReference type="ChEBI" id="CHEBI:15378"/>
        <dbReference type="ChEBI" id="CHEBI:16199"/>
        <dbReference type="ChEBI" id="CHEBI:17544"/>
        <dbReference type="ChEBI" id="CHEBI:28938"/>
        <dbReference type="EC" id="3.5.1.5"/>
    </reaction>
</comment>
<comment type="pathway">
    <text evidence="1">Nitrogen metabolism; urea degradation; CO(2) and NH(3) from urea (urease route): step 1/1.</text>
</comment>
<comment type="subunit">
    <text evidence="1">Heterotrimer of UreA (gamma), UreB (beta) and UreC (alpha) subunits. Three heterotrimers associate to form the active enzyme.</text>
</comment>
<comment type="subcellular location">
    <subcellularLocation>
        <location evidence="1">Cytoplasm</location>
    </subcellularLocation>
</comment>
<comment type="similarity">
    <text evidence="1">Belongs to the urease beta subunit family.</text>
</comment>
<dbReference type="EC" id="3.5.1.5" evidence="1"/>
<dbReference type="EMBL" id="CP000023">
    <property type="protein sequence ID" value="AAV60004.1"/>
    <property type="molecule type" value="Genomic_DNA"/>
</dbReference>
<dbReference type="RefSeq" id="WP_002886559.1">
    <property type="nucleotide sequence ID" value="NC_006448.1"/>
</dbReference>
<dbReference type="SMR" id="Q5M608"/>
<dbReference type="STRING" id="264199.stu0282"/>
<dbReference type="KEGG" id="stl:stu0282"/>
<dbReference type="eggNOG" id="COG0832">
    <property type="taxonomic scope" value="Bacteria"/>
</dbReference>
<dbReference type="HOGENOM" id="CLU_129707_1_1_9"/>
<dbReference type="UniPathway" id="UPA00258">
    <property type="reaction ID" value="UER00370"/>
</dbReference>
<dbReference type="Proteomes" id="UP000001170">
    <property type="component" value="Chromosome"/>
</dbReference>
<dbReference type="GO" id="GO:0035550">
    <property type="term" value="C:urease complex"/>
    <property type="evidence" value="ECO:0007669"/>
    <property type="project" value="InterPro"/>
</dbReference>
<dbReference type="GO" id="GO:0009039">
    <property type="term" value="F:urease activity"/>
    <property type="evidence" value="ECO:0007669"/>
    <property type="project" value="UniProtKB-UniRule"/>
</dbReference>
<dbReference type="GO" id="GO:0043419">
    <property type="term" value="P:urea catabolic process"/>
    <property type="evidence" value="ECO:0007669"/>
    <property type="project" value="UniProtKB-UniRule"/>
</dbReference>
<dbReference type="CDD" id="cd00407">
    <property type="entry name" value="Urease_beta"/>
    <property type="match status" value="1"/>
</dbReference>
<dbReference type="FunFam" id="2.10.150.10:FF:000001">
    <property type="entry name" value="Urease subunit beta"/>
    <property type="match status" value="1"/>
</dbReference>
<dbReference type="Gene3D" id="2.10.150.10">
    <property type="entry name" value="Urease, beta subunit"/>
    <property type="match status" value="1"/>
</dbReference>
<dbReference type="HAMAP" id="MF_01954">
    <property type="entry name" value="Urease_beta"/>
    <property type="match status" value="1"/>
</dbReference>
<dbReference type="InterPro" id="IPR002019">
    <property type="entry name" value="Urease_beta-like"/>
</dbReference>
<dbReference type="InterPro" id="IPR036461">
    <property type="entry name" value="Urease_betasu_sf"/>
</dbReference>
<dbReference type="InterPro" id="IPR050069">
    <property type="entry name" value="Urease_subunit"/>
</dbReference>
<dbReference type="NCBIfam" id="NF009682">
    <property type="entry name" value="PRK13203.1"/>
    <property type="match status" value="1"/>
</dbReference>
<dbReference type="NCBIfam" id="TIGR00192">
    <property type="entry name" value="urease_beta"/>
    <property type="match status" value="1"/>
</dbReference>
<dbReference type="PANTHER" id="PTHR33569">
    <property type="entry name" value="UREASE"/>
    <property type="match status" value="1"/>
</dbReference>
<dbReference type="PANTHER" id="PTHR33569:SF1">
    <property type="entry name" value="UREASE"/>
    <property type="match status" value="1"/>
</dbReference>
<dbReference type="Pfam" id="PF00699">
    <property type="entry name" value="Urease_beta"/>
    <property type="match status" value="1"/>
</dbReference>
<dbReference type="SUPFAM" id="SSF51278">
    <property type="entry name" value="Urease, beta-subunit"/>
    <property type="match status" value="1"/>
</dbReference>
<name>URE2_STRT2</name>
<proteinExistence type="inferred from homology"/>
<evidence type="ECO:0000255" key="1">
    <source>
        <dbReference type="HAMAP-Rule" id="MF_01954"/>
    </source>
</evidence>
<accession>Q5M608</accession>